<gene>
    <name evidence="1" type="primary">tsaD</name>
    <name type="synonym">gcp</name>
    <name type="ordered locus">SG0254</name>
</gene>
<evidence type="ECO:0000255" key="1">
    <source>
        <dbReference type="HAMAP-Rule" id="MF_01445"/>
    </source>
</evidence>
<protein>
    <recommendedName>
        <fullName evidence="1">tRNA N6-adenosine threonylcarbamoyltransferase</fullName>
        <ecNumber evidence="1">2.3.1.234</ecNumber>
    </recommendedName>
    <alternativeName>
        <fullName evidence="1">N6-L-threonylcarbamoyladenine synthase</fullName>
        <shortName evidence="1">t(6)A synthase</shortName>
    </alternativeName>
    <alternativeName>
        <fullName evidence="1">t(6)A37 threonylcarbamoyladenosine biosynthesis protein TsaD</fullName>
    </alternativeName>
    <alternativeName>
        <fullName evidence="1">tRNA threonylcarbamoyladenosine biosynthesis protein TsaD</fullName>
    </alternativeName>
</protein>
<proteinExistence type="inferred from homology"/>
<accession>Q2NWE6</accession>
<name>TSAD_SODGM</name>
<reference key="1">
    <citation type="journal article" date="2006" name="Genome Res.">
        <title>Massive genome erosion and functional adaptations provide insights into the symbiotic lifestyle of Sodalis glossinidius in the tsetse host.</title>
        <authorList>
            <person name="Toh H."/>
            <person name="Weiss B.L."/>
            <person name="Perkin S.A.H."/>
            <person name="Yamashita A."/>
            <person name="Oshima K."/>
            <person name="Hattori M."/>
            <person name="Aksoy S."/>
        </authorList>
    </citation>
    <scope>NUCLEOTIDE SEQUENCE [LARGE SCALE GENOMIC DNA]</scope>
    <source>
        <strain>morsitans</strain>
    </source>
</reference>
<keyword id="KW-0012">Acyltransferase</keyword>
<keyword id="KW-0963">Cytoplasm</keyword>
<keyword id="KW-0408">Iron</keyword>
<keyword id="KW-0479">Metal-binding</keyword>
<keyword id="KW-0808">Transferase</keyword>
<keyword id="KW-0819">tRNA processing</keyword>
<feature type="chain" id="PRO_0000303541" description="tRNA N6-adenosine threonylcarbamoyltransferase">
    <location>
        <begin position="1"/>
        <end position="339"/>
    </location>
</feature>
<feature type="binding site" evidence="1">
    <location>
        <position position="111"/>
    </location>
    <ligand>
        <name>Fe cation</name>
        <dbReference type="ChEBI" id="CHEBI:24875"/>
    </ligand>
</feature>
<feature type="binding site" evidence="1">
    <location>
        <position position="115"/>
    </location>
    <ligand>
        <name>Fe cation</name>
        <dbReference type="ChEBI" id="CHEBI:24875"/>
    </ligand>
</feature>
<feature type="binding site" evidence="1">
    <location>
        <begin position="134"/>
        <end position="138"/>
    </location>
    <ligand>
        <name>substrate</name>
    </ligand>
</feature>
<feature type="binding site" evidence="1">
    <location>
        <position position="167"/>
    </location>
    <ligand>
        <name>substrate</name>
    </ligand>
</feature>
<feature type="binding site" evidence="1">
    <location>
        <position position="180"/>
    </location>
    <ligand>
        <name>substrate</name>
    </ligand>
</feature>
<feature type="binding site" evidence="1">
    <location>
        <position position="272"/>
    </location>
    <ligand>
        <name>substrate</name>
    </ligand>
</feature>
<feature type="binding site" evidence="1">
    <location>
        <position position="300"/>
    </location>
    <ligand>
        <name>Fe cation</name>
        <dbReference type="ChEBI" id="CHEBI:24875"/>
    </ligand>
</feature>
<comment type="function">
    <text evidence="1">Required for the formation of a threonylcarbamoyl group on adenosine at position 37 (t(6)A37) in tRNAs that read codons beginning with adenine. Is involved in the transfer of the threonylcarbamoyl moiety of threonylcarbamoyl-AMP (TC-AMP) to the N6 group of A37, together with TsaE and TsaB. TsaD likely plays a direct catalytic role in this reaction.</text>
</comment>
<comment type="catalytic activity">
    <reaction evidence="1">
        <text>L-threonylcarbamoyladenylate + adenosine(37) in tRNA = N(6)-L-threonylcarbamoyladenosine(37) in tRNA + AMP + H(+)</text>
        <dbReference type="Rhea" id="RHEA:37059"/>
        <dbReference type="Rhea" id="RHEA-COMP:10162"/>
        <dbReference type="Rhea" id="RHEA-COMP:10163"/>
        <dbReference type="ChEBI" id="CHEBI:15378"/>
        <dbReference type="ChEBI" id="CHEBI:73682"/>
        <dbReference type="ChEBI" id="CHEBI:74411"/>
        <dbReference type="ChEBI" id="CHEBI:74418"/>
        <dbReference type="ChEBI" id="CHEBI:456215"/>
        <dbReference type="EC" id="2.3.1.234"/>
    </reaction>
</comment>
<comment type="cofactor">
    <cofactor evidence="1">
        <name>Fe(2+)</name>
        <dbReference type="ChEBI" id="CHEBI:29033"/>
    </cofactor>
    <text evidence="1">Binds 1 Fe(2+) ion per subunit.</text>
</comment>
<comment type="subcellular location">
    <subcellularLocation>
        <location evidence="1">Cytoplasm</location>
    </subcellularLocation>
</comment>
<comment type="similarity">
    <text evidence="1">Belongs to the KAE1 / TsaD family.</text>
</comment>
<organism>
    <name type="scientific">Sodalis glossinidius (strain morsitans)</name>
    <dbReference type="NCBI Taxonomy" id="343509"/>
    <lineage>
        <taxon>Bacteria</taxon>
        <taxon>Pseudomonadati</taxon>
        <taxon>Pseudomonadota</taxon>
        <taxon>Gammaproteobacteria</taxon>
        <taxon>Enterobacterales</taxon>
        <taxon>Bruguierivoracaceae</taxon>
        <taxon>Sodalis</taxon>
    </lineage>
</organism>
<dbReference type="EC" id="2.3.1.234" evidence="1"/>
<dbReference type="EMBL" id="AP008232">
    <property type="protein sequence ID" value="BAE73529.1"/>
    <property type="molecule type" value="Genomic_DNA"/>
</dbReference>
<dbReference type="RefSeq" id="WP_011410117.1">
    <property type="nucleotide sequence ID" value="NC_007712.1"/>
</dbReference>
<dbReference type="SMR" id="Q2NWE6"/>
<dbReference type="STRING" id="343509.SG0254"/>
<dbReference type="KEGG" id="sgl:SG0254"/>
<dbReference type="eggNOG" id="COG0533">
    <property type="taxonomic scope" value="Bacteria"/>
</dbReference>
<dbReference type="HOGENOM" id="CLU_023208_0_0_6"/>
<dbReference type="OrthoDB" id="9806197at2"/>
<dbReference type="BioCyc" id="SGLO343509:SGP1_RS02410-MONOMER"/>
<dbReference type="Proteomes" id="UP000001932">
    <property type="component" value="Chromosome"/>
</dbReference>
<dbReference type="GO" id="GO:0005737">
    <property type="term" value="C:cytoplasm"/>
    <property type="evidence" value="ECO:0007669"/>
    <property type="project" value="UniProtKB-SubCell"/>
</dbReference>
<dbReference type="GO" id="GO:0005506">
    <property type="term" value="F:iron ion binding"/>
    <property type="evidence" value="ECO:0007669"/>
    <property type="project" value="UniProtKB-UniRule"/>
</dbReference>
<dbReference type="GO" id="GO:0061711">
    <property type="term" value="F:N(6)-L-threonylcarbamoyladenine synthase activity"/>
    <property type="evidence" value="ECO:0007669"/>
    <property type="project" value="UniProtKB-EC"/>
</dbReference>
<dbReference type="GO" id="GO:0002949">
    <property type="term" value="P:tRNA threonylcarbamoyladenosine modification"/>
    <property type="evidence" value="ECO:0007669"/>
    <property type="project" value="UniProtKB-UniRule"/>
</dbReference>
<dbReference type="CDD" id="cd24133">
    <property type="entry name" value="ASKHA_NBD_TsaD_bac"/>
    <property type="match status" value="1"/>
</dbReference>
<dbReference type="FunFam" id="3.30.420.40:FF:000031">
    <property type="entry name" value="tRNA N6-adenosine threonylcarbamoyltransferase"/>
    <property type="match status" value="1"/>
</dbReference>
<dbReference type="Gene3D" id="3.30.420.40">
    <property type="match status" value="2"/>
</dbReference>
<dbReference type="HAMAP" id="MF_01445">
    <property type="entry name" value="TsaD"/>
    <property type="match status" value="1"/>
</dbReference>
<dbReference type="InterPro" id="IPR043129">
    <property type="entry name" value="ATPase_NBD"/>
</dbReference>
<dbReference type="InterPro" id="IPR000905">
    <property type="entry name" value="Gcp-like_dom"/>
</dbReference>
<dbReference type="InterPro" id="IPR017861">
    <property type="entry name" value="KAE1/TsaD"/>
</dbReference>
<dbReference type="InterPro" id="IPR017860">
    <property type="entry name" value="Peptidase_M22_CS"/>
</dbReference>
<dbReference type="InterPro" id="IPR022450">
    <property type="entry name" value="TsaD"/>
</dbReference>
<dbReference type="NCBIfam" id="TIGR00329">
    <property type="entry name" value="gcp_kae1"/>
    <property type="match status" value="1"/>
</dbReference>
<dbReference type="NCBIfam" id="TIGR03723">
    <property type="entry name" value="T6A_TsaD_YgjD"/>
    <property type="match status" value="1"/>
</dbReference>
<dbReference type="PANTHER" id="PTHR11735">
    <property type="entry name" value="TRNA N6-ADENOSINE THREONYLCARBAMOYLTRANSFERASE"/>
    <property type="match status" value="1"/>
</dbReference>
<dbReference type="PANTHER" id="PTHR11735:SF6">
    <property type="entry name" value="TRNA N6-ADENOSINE THREONYLCARBAMOYLTRANSFERASE, MITOCHONDRIAL"/>
    <property type="match status" value="1"/>
</dbReference>
<dbReference type="Pfam" id="PF00814">
    <property type="entry name" value="TsaD"/>
    <property type="match status" value="1"/>
</dbReference>
<dbReference type="PRINTS" id="PR00789">
    <property type="entry name" value="OSIALOPTASE"/>
</dbReference>
<dbReference type="SUPFAM" id="SSF53067">
    <property type="entry name" value="Actin-like ATPase domain"/>
    <property type="match status" value="1"/>
</dbReference>
<dbReference type="PROSITE" id="PS01016">
    <property type="entry name" value="GLYCOPROTEASE"/>
    <property type="match status" value="1"/>
</dbReference>
<sequence length="339" mass="35906">MRVLGIETSCDETGVAIYDQQQGLLANQLYSQVKLHADYGGVVPELASRDHVHKTVPLIQAALAEAGLQASDIHGVAYTAGPGLVGALMVGATVGRALAYAWGVPAVAVHHMEGHLLAPMLEANPPAFPFVALLVSGGHTQLIAVTGIGEYQLLGESIDDAAGEAFDKTAKLLGLDYPGGPMLARLAQQGVPGRYKFPRPMTDHPGLAFSFSGLKTFAANTVRAGADDHQTRADVARAFEEAVVDTLMIKCRRALDQTRFQRLVMAGGVSANQSLRASMGEMMRQRGGEVFYARPEFCTDNGAMIAYAGMVRLQGGSQASLAVSVRPRWPLEELPALGA</sequence>